<protein>
    <recommendedName>
        <fullName evidence="2">Small ribosomal subunit protein uS12</fullName>
    </recommendedName>
    <alternativeName>
        <fullName evidence="4">30S ribosomal protein S12</fullName>
    </alternativeName>
</protein>
<proteinExistence type="inferred from homology"/>
<organism>
    <name type="scientific">Salinispora arenicola (strain CNS-205)</name>
    <dbReference type="NCBI Taxonomy" id="391037"/>
    <lineage>
        <taxon>Bacteria</taxon>
        <taxon>Bacillati</taxon>
        <taxon>Actinomycetota</taxon>
        <taxon>Actinomycetes</taxon>
        <taxon>Micromonosporales</taxon>
        <taxon>Micromonosporaceae</taxon>
        <taxon>Salinispora</taxon>
    </lineage>
</organism>
<comment type="function">
    <text evidence="2">With S4 and S5 plays an important role in translational accuracy.</text>
</comment>
<comment type="function">
    <text evidence="2">Interacts with and stabilizes bases of the 16S rRNA that are involved in tRNA selection in the A site and with the mRNA backbone. Located at the interface of the 30S and 50S subunits, it traverses the body of the 30S subunit contacting proteins on the other side and probably holding the rRNA structure together. The combined cluster of proteins S8, S12 and S17 appears to hold together the shoulder and platform of the 30S subunit.</text>
</comment>
<comment type="subunit">
    <text evidence="2">Part of the 30S ribosomal subunit. Contacts proteins S8 and S17. May interact with IF1 in the 30S initiation complex.</text>
</comment>
<comment type="similarity">
    <text evidence="2">Belongs to the universal ribosomal protein uS12 family.</text>
</comment>
<sequence length="124" mass="13803">MPTIQQLVRKGRQAKTTKTKTPALKGSPQRRGVCTRVYTTTPKKPNSALRKVARVKLSSQIEVTAYIPGVGHNLQEHSIVLVRGGRVKDLPGVRYKIVRGSLDTQGVRNRKQARSRYGAKKEKS</sequence>
<feature type="chain" id="PRO_1000080412" description="Small ribosomal subunit protein uS12">
    <location>
        <begin position="1"/>
        <end position="124"/>
    </location>
</feature>
<feature type="region of interest" description="Disordered" evidence="3">
    <location>
        <begin position="1"/>
        <end position="32"/>
    </location>
</feature>
<feature type="region of interest" description="Disordered" evidence="3">
    <location>
        <begin position="105"/>
        <end position="124"/>
    </location>
</feature>
<feature type="compositionally biased region" description="Basic residues" evidence="3">
    <location>
        <begin position="9"/>
        <end position="18"/>
    </location>
</feature>
<feature type="compositionally biased region" description="Basic residues" evidence="3">
    <location>
        <begin position="108"/>
        <end position="118"/>
    </location>
</feature>
<feature type="modified residue" description="3-methylthioaspartic acid" evidence="1">
    <location>
        <position position="89"/>
    </location>
</feature>
<dbReference type="EMBL" id="CP000850">
    <property type="protein sequence ID" value="ABW00102.1"/>
    <property type="molecule type" value="Genomic_DNA"/>
</dbReference>
<dbReference type="SMR" id="A8M534"/>
<dbReference type="STRING" id="391037.Sare_4320"/>
<dbReference type="KEGG" id="saq:Sare_4320"/>
<dbReference type="eggNOG" id="COG0048">
    <property type="taxonomic scope" value="Bacteria"/>
</dbReference>
<dbReference type="HOGENOM" id="CLU_104295_1_2_11"/>
<dbReference type="OrthoDB" id="9802366at2"/>
<dbReference type="GO" id="GO:0015935">
    <property type="term" value="C:small ribosomal subunit"/>
    <property type="evidence" value="ECO:0007669"/>
    <property type="project" value="InterPro"/>
</dbReference>
<dbReference type="GO" id="GO:0019843">
    <property type="term" value="F:rRNA binding"/>
    <property type="evidence" value="ECO:0007669"/>
    <property type="project" value="UniProtKB-UniRule"/>
</dbReference>
<dbReference type="GO" id="GO:0003735">
    <property type="term" value="F:structural constituent of ribosome"/>
    <property type="evidence" value="ECO:0007669"/>
    <property type="project" value="InterPro"/>
</dbReference>
<dbReference type="GO" id="GO:0000049">
    <property type="term" value="F:tRNA binding"/>
    <property type="evidence" value="ECO:0007669"/>
    <property type="project" value="UniProtKB-UniRule"/>
</dbReference>
<dbReference type="GO" id="GO:0006412">
    <property type="term" value="P:translation"/>
    <property type="evidence" value="ECO:0007669"/>
    <property type="project" value="UniProtKB-UniRule"/>
</dbReference>
<dbReference type="CDD" id="cd03368">
    <property type="entry name" value="Ribosomal_S12"/>
    <property type="match status" value="1"/>
</dbReference>
<dbReference type="FunFam" id="2.40.50.140:FF:000001">
    <property type="entry name" value="30S ribosomal protein S12"/>
    <property type="match status" value="1"/>
</dbReference>
<dbReference type="Gene3D" id="2.40.50.140">
    <property type="entry name" value="Nucleic acid-binding proteins"/>
    <property type="match status" value="1"/>
</dbReference>
<dbReference type="HAMAP" id="MF_00403_B">
    <property type="entry name" value="Ribosomal_uS12_B"/>
    <property type="match status" value="1"/>
</dbReference>
<dbReference type="InterPro" id="IPR012340">
    <property type="entry name" value="NA-bd_OB-fold"/>
</dbReference>
<dbReference type="InterPro" id="IPR006032">
    <property type="entry name" value="Ribosomal_uS12"/>
</dbReference>
<dbReference type="InterPro" id="IPR005679">
    <property type="entry name" value="Ribosomal_uS12_bac"/>
</dbReference>
<dbReference type="NCBIfam" id="TIGR00981">
    <property type="entry name" value="rpsL_bact"/>
    <property type="match status" value="1"/>
</dbReference>
<dbReference type="PANTHER" id="PTHR11652">
    <property type="entry name" value="30S RIBOSOMAL PROTEIN S12 FAMILY MEMBER"/>
    <property type="match status" value="1"/>
</dbReference>
<dbReference type="Pfam" id="PF00164">
    <property type="entry name" value="Ribosom_S12_S23"/>
    <property type="match status" value="1"/>
</dbReference>
<dbReference type="PIRSF" id="PIRSF002133">
    <property type="entry name" value="Ribosomal_S12/S23"/>
    <property type="match status" value="1"/>
</dbReference>
<dbReference type="PRINTS" id="PR01034">
    <property type="entry name" value="RIBOSOMALS12"/>
</dbReference>
<dbReference type="SUPFAM" id="SSF50249">
    <property type="entry name" value="Nucleic acid-binding proteins"/>
    <property type="match status" value="1"/>
</dbReference>
<dbReference type="PROSITE" id="PS00055">
    <property type="entry name" value="RIBOSOMAL_S12"/>
    <property type="match status" value="1"/>
</dbReference>
<keyword id="KW-0488">Methylation</keyword>
<keyword id="KW-0687">Ribonucleoprotein</keyword>
<keyword id="KW-0689">Ribosomal protein</keyword>
<keyword id="KW-0694">RNA-binding</keyword>
<keyword id="KW-0699">rRNA-binding</keyword>
<keyword id="KW-0820">tRNA-binding</keyword>
<name>RS12_SALAI</name>
<evidence type="ECO:0000250" key="1"/>
<evidence type="ECO:0000255" key="2">
    <source>
        <dbReference type="HAMAP-Rule" id="MF_00403"/>
    </source>
</evidence>
<evidence type="ECO:0000256" key="3">
    <source>
        <dbReference type="SAM" id="MobiDB-lite"/>
    </source>
</evidence>
<evidence type="ECO:0000305" key="4"/>
<reference key="1">
    <citation type="submission" date="2007-10" db="EMBL/GenBank/DDBJ databases">
        <title>Complete sequence of Salinispora arenicola CNS-205.</title>
        <authorList>
            <consortium name="US DOE Joint Genome Institute"/>
            <person name="Copeland A."/>
            <person name="Lucas S."/>
            <person name="Lapidus A."/>
            <person name="Barry K."/>
            <person name="Glavina del Rio T."/>
            <person name="Dalin E."/>
            <person name="Tice H."/>
            <person name="Pitluck S."/>
            <person name="Foster B."/>
            <person name="Schmutz J."/>
            <person name="Larimer F."/>
            <person name="Land M."/>
            <person name="Hauser L."/>
            <person name="Kyrpides N."/>
            <person name="Ivanova N."/>
            <person name="Jensen P.R."/>
            <person name="Moore B.S."/>
            <person name="Penn K."/>
            <person name="Jenkins C."/>
            <person name="Udwary D."/>
            <person name="Xiang L."/>
            <person name="Gontang E."/>
            <person name="Richardson P."/>
        </authorList>
    </citation>
    <scope>NUCLEOTIDE SEQUENCE [LARGE SCALE GENOMIC DNA]</scope>
    <source>
        <strain>CNS-205</strain>
    </source>
</reference>
<accession>A8M534</accession>
<gene>
    <name evidence="2" type="primary">rpsL</name>
    <name type="ordered locus">Sare_4320</name>
</gene>